<proteinExistence type="evidence at protein level"/>
<accession>G5EFT4</accession>
<accession>A3QMC1</accession>
<accession>A3QMC2</accession>
<keyword id="KW-0025">Alternative splicing</keyword>
<keyword id="KW-0031">Aminopeptidase</keyword>
<keyword id="KW-0963">Cytoplasm</keyword>
<keyword id="KW-0378">Hydrolase</keyword>
<keyword id="KW-0479">Metal-binding</keyword>
<keyword id="KW-0482">Metalloprotease</keyword>
<keyword id="KW-0645">Protease</keyword>
<keyword id="KW-1185">Reference proteome</keyword>
<keyword id="KW-0862">Zinc</keyword>
<feature type="chain" id="PRO_0000440800" description="Aminopeptidase ltah-1.1">
    <location>
        <begin position="1"/>
        <end position="609"/>
    </location>
</feature>
<feature type="active site" description="Proton acceptor" evidence="1">
    <location>
        <position position="298"/>
    </location>
</feature>
<feature type="active site" description="Proton donor" evidence="1">
    <location>
        <position position="387"/>
    </location>
</feature>
<feature type="binding site" evidence="1">
    <location>
        <begin position="137"/>
        <end position="139"/>
    </location>
    <ligand>
        <name>substrate</name>
    </ligand>
</feature>
<feature type="binding site" evidence="1">
    <location>
        <begin position="268"/>
        <end position="273"/>
    </location>
    <ligand>
        <name>substrate</name>
    </ligand>
</feature>
<feature type="binding site" evidence="2">
    <location>
        <position position="297"/>
    </location>
    <ligand>
        <name>Zn(2+)</name>
        <dbReference type="ChEBI" id="CHEBI:29105"/>
        <note>catalytic</note>
    </ligand>
</feature>
<feature type="binding site" evidence="2">
    <location>
        <position position="301"/>
    </location>
    <ligand>
        <name>Zn(2+)</name>
        <dbReference type="ChEBI" id="CHEBI:29105"/>
        <note>catalytic</note>
    </ligand>
</feature>
<feature type="binding site" evidence="1">
    <location>
        <position position="320"/>
    </location>
    <ligand>
        <name>Zn(2+)</name>
        <dbReference type="ChEBI" id="CHEBI:29105"/>
        <note>catalytic</note>
    </ligand>
</feature>
<feature type="binding site" evidence="1">
    <location>
        <begin position="564"/>
        <end position="566"/>
    </location>
    <ligand>
        <name>substrate</name>
    </ligand>
</feature>
<feature type="splice variant" id="VSP_058995" description="In isoform c." evidence="5">
    <location>
        <position position="130"/>
    </location>
</feature>
<feature type="splice variant" id="VSP_058996" description="In isoform b." evidence="5">
    <original>APYLFSQCQAINARSIVPCMDTPSVKS</original>
    <variation>VIFKFKVHFSKIFDNSGSLSILSMPSN</variation>
    <location>
        <begin position="131"/>
        <end position="157"/>
    </location>
</feature>
<feature type="splice variant" id="VSP_058997" description="In isoform b." evidence="5">
    <location>
        <begin position="158"/>
        <end position="609"/>
    </location>
</feature>
<gene>
    <name evidence="4 9" type="primary">ltah-1.1</name>
    <name evidence="9" type="ORF">C42C1.11</name>
</gene>
<protein>
    <recommendedName>
        <fullName evidence="5">Aminopeptidase ltah-1.1</fullName>
        <ecNumber evidence="6">3.4.11.6</ecNumber>
    </recommendedName>
    <alternativeName>
        <fullName evidence="4">Aminopeptidase-1</fullName>
        <shortName evidence="4">AP-1</shortName>
    </alternativeName>
    <alternativeName>
        <fullName evidence="5">Arginine aminopeptidase 1</fullName>
    </alternativeName>
    <alternativeName>
        <fullName evidence="9">Leukotriene A4 hydrolase homolog ltah-1.1</fullName>
    </alternativeName>
</protein>
<sequence>MAPPHPRDPSTAANYEQVTVSHYALKWKVDFEKKHIAGDVSITLDVKQDTERIVLDTRDLSVQSVALNLNGEPKKAGFTLEDNQALGQKLVITTESLKSGDRPVLEIKYESSNNAAALQFLTAEQTTDRVAPYLFSQCQAINARSIVPCMDTPSVKSTYEAEVCVPIGLTCLMSAIGQGSTPSECGKRTIFSFKQPVSIPSYLLAIVVGHLERKEISERCAVWAEPSQAEASFYEFAETEKILKVAEDVAGPYVWGRYDLVVLPATFPFGGMENPCLTFITPTLLAGDRSLVNVIAHEISHSWTGNLVTNFSWEHFWLNEGFTVFLERKIHGKMYGELERQFESESGYEEALVRTVNDVFGPDHEYTKLVQNLGNADPDDAFSSVPYEKGSALLFTIEQALGDNSRFEQFLRDYIQKYAYKTVSTEEWKEYLYDSFTDKKVILDNIDWNLWLHKAGLPPKPKYDSTPMQACKDLAAKWTTEGSEAPTDGEVFAKMSNSQKLAVLDAVRVNKTMFGDRMPALTATYKLDQAKNAELKFSWLMLGLETKWSPIVDASLAFALAVGRMKYCKPIYRSLFGWSATRDRAISQFKANIPNMHPITVKAIQSLLK</sequence>
<dbReference type="EC" id="3.4.11.6" evidence="6"/>
<dbReference type="EMBL" id="AF068201">
    <property type="protein sequence ID" value="AAC70927.1"/>
    <property type="molecule type" value="mRNA"/>
</dbReference>
<dbReference type="EMBL" id="AF068200">
    <property type="protein sequence ID" value="AAC72891.1"/>
    <property type="molecule type" value="Genomic_DNA"/>
</dbReference>
<dbReference type="EMBL" id="BX284604">
    <property type="protein sequence ID" value="CAM36352.1"/>
    <property type="molecule type" value="Genomic_DNA"/>
</dbReference>
<dbReference type="EMBL" id="BX284604">
    <property type="protein sequence ID" value="CAM36353.1"/>
    <property type="molecule type" value="Genomic_DNA"/>
</dbReference>
<dbReference type="EMBL" id="BX284604">
    <property type="protein sequence ID" value="CAM36354.1"/>
    <property type="molecule type" value="Genomic_DNA"/>
</dbReference>
<dbReference type="PIR" id="T32899">
    <property type="entry name" value="T32899"/>
</dbReference>
<dbReference type="RefSeq" id="NP_001023056.1">
    <molecule id="G5EFT4-1"/>
    <property type="nucleotide sequence ID" value="NM_001027885.5"/>
</dbReference>
<dbReference type="RefSeq" id="NP_001023057.1">
    <property type="nucleotide sequence ID" value="NM_001027886.3"/>
</dbReference>
<dbReference type="RefSeq" id="NP_001023058.1">
    <molecule id="G5EFT4-3"/>
    <property type="nucleotide sequence ID" value="NM_001027887.6"/>
</dbReference>
<dbReference type="RefSeq" id="NP_001367152.1">
    <molecule id="G5EFT4-2"/>
    <property type="nucleotide sequence ID" value="NM_001380482.2"/>
</dbReference>
<dbReference type="SMR" id="G5EFT4"/>
<dbReference type="FunCoup" id="G5EFT4">
    <property type="interactions" value="1645"/>
</dbReference>
<dbReference type="STRING" id="6239.C42C1.11a.1"/>
<dbReference type="MEROPS" id="M01.025"/>
<dbReference type="PaxDb" id="6239-C42C1.11a"/>
<dbReference type="PeptideAtlas" id="G5EFT4"/>
<dbReference type="EnsemblMetazoa" id="C42C1.11a.1">
    <molecule id="G5EFT4-1"/>
    <property type="protein sequence ID" value="C42C1.11a.1"/>
    <property type="gene ID" value="WBGene00016589"/>
</dbReference>
<dbReference type="EnsemblMetazoa" id="C42C1.11a.2">
    <molecule id="G5EFT4-1"/>
    <property type="protein sequence ID" value="C42C1.11a.2"/>
    <property type="gene ID" value="WBGene00016589"/>
</dbReference>
<dbReference type="EnsemblMetazoa" id="C42C1.11b.1">
    <molecule id="G5EFT4-2"/>
    <property type="protein sequence ID" value="C42C1.11b.1"/>
    <property type="gene ID" value="WBGene00016589"/>
</dbReference>
<dbReference type="EnsemblMetazoa" id="C42C1.11b.2">
    <molecule id="G5EFT4-2"/>
    <property type="protein sequence ID" value="C42C1.11b.2"/>
    <property type="gene ID" value="WBGene00016589"/>
</dbReference>
<dbReference type="EnsemblMetazoa" id="C42C1.11c.1">
    <molecule id="G5EFT4-3"/>
    <property type="protein sequence ID" value="C42C1.11c.1"/>
    <property type="gene ID" value="WBGene00016589"/>
</dbReference>
<dbReference type="GeneID" id="178176"/>
<dbReference type="KEGG" id="cel:CELE_C42C1.11"/>
<dbReference type="UCSC" id="C42C1.11a.2">
    <property type="organism name" value="c. elegans"/>
</dbReference>
<dbReference type="AGR" id="WB:WBGene00016589"/>
<dbReference type="CTD" id="178176"/>
<dbReference type="WormBase" id="C42C1.11a">
    <molecule id="G5EFT4-1"/>
    <property type="protein sequence ID" value="CE24840"/>
    <property type="gene ID" value="WBGene00016589"/>
    <property type="gene designation" value="ltah-1.1"/>
</dbReference>
<dbReference type="WormBase" id="C42C1.11b">
    <molecule id="G5EFT4-2"/>
    <property type="protein sequence ID" value="CE33564"/>
    <property type="gene ID" value="WBGene00016589"/>
    <property type="gene designation" value="ltah-1.1"/>
</dbReference>
<dbReference type="WormBase" id="C42C1.11c">
    <molecule id="G5EFT4-3"/>
    <property type="protein sequence ID" value="CE33565"/>
    <property type="gene ID" value="WBGene00016589"/>
    <property type="gene designation" value="ltah-1.1"/>
</dbReference>
<dbReference type="eggNOG" id="KOG1047">
    <property type="taxonomic scope" value="Eukaryota"/>
</dbReference>
<dbReference type="GeneTree" id="ENSGT00940000156375"/>
<dbReference type="InParanoid" id="G5EFT4"/>
<dbReference type="OMA" id="VSHYDLR"/>
<dbReference type="OrthoDB" id="79562at2759"/>
<dbReference type="PhylomeDB" id="G5EFT4"/>
<dbReference type="Reactome" id="R-CEL-2142691">
    <property type="pathway name" value="Synthesis of Leukotrienes (LT) and Eoxins (EX)"/>
</dbReference>
<dbReference type="Reactome" id="R-CEL-6798695">
    <property type="pathway name" value="Neutrophil degranulation"/>
</dbReference>
<dbReference type="Reactome" id="R-CEL-9018676">
    <property type="pathway name" value="Biosynthesis of D-series resolvins"/>
</dbReference>
<dbReference type="Reactome" id="R-CEL-9018681">
    <property type="pathway name" value="Biosynthesis of protectins"/>
</dbReference>
<dbReference type="Reactome" id="R-CEL-9018896">
    <property type="pathway name" value="Biosynthesis of E-series 18(S)-resolvins"/>
</dbReference>
<dbReference type="Reactome" id="R-CEL-9020265">
    <property type="pathway name" value="Biosynthesis of aspirin-triggered D-series resolvins"/>
</dbReference>
<dbReference type="Reactome" id="R-CEL-9023661">
    <property type="pathway name" value="Biosynthesis of E-series 18(R)-resolvins"/>
</dbReference>
<dbReference type="PRO" id="PR:G5EFT4"/>
<dbReference type="Proteomes" id="UP000001940">
    <property type="component" value="Chromosome IV"/>
</dbReference>
<dbReference type="Bgee" id="WBGene00016589">
    <property type="expression patterns" value="Expressed in germ line (C elegans) and 4 other cell types or tissues"/>
</dbReference>
<dbReference type="GO" id="GO:0005829">
    <property type="term" value="C:cytosol"/>
    <property type="evidence" value="ECO:0000314"/>
    <property type="project" value="WormBase"/>
</dbReference>
<dbReference type="GO" id="GO:0004177">
    <property type="term" value="F:aminopeptidase activity"/>
    <property type="evidence" value="ECO:0000314"/>
    <property type="project" value="WormBase"/>
</dbReference>
<dbReference type="GO" id="GO:0004301">
    <property type="term" value="F:epoxide hydrolase activity"/>
    <property type="evidence" value="ECO:0000318"/>
    <property type="project" value="GO_Central"/>
</dbReference>
<dbReference type="GO" id="GO:0008237">
    <property type="term" value="F:metallopeptidase activity"/>
    <property type="evidence" value="ECO:0007669"/>
    <property type="project" value="UniProtKB-KW"/>
</dbReference>
<dbReference type="GO" id="GO:0008270">
    <property type="term" value="F:zinc ion binding"/>
    <property type="evidence" value="ECO:0007669"/>
    <property type="project" value="InterPro"/>
</dbReference>
<dbReference type="GO" id="GO:0043171">
    <property type="term" value="P:peptide catabolic process"/>
    <property type="evidence" value="ECO:0000314"/>
    <property type="project" value="WormBase"/>
</dbReference>
<dbReference type="GO" id="GO:0006508">
    <property type="term" value="P:proteolysis"/>
    <property type="evidence" value="ECO:0007669"/>
    <property type="project" value="UniProtKB-KW"/>
</dbReference>
<dbReference type="CDD" id="cd09599">
    <property type="entry name" value="M1_LTA4H"/>
    <property type="match status" value="1"/>
</dbReference>
<dbReference type="FunFam" id="1.10.390.10:FF:000003">
    <property type="entry name" value="Leukotriene A(4) hydrolase"/>
    <property type="match status" value="1"/>
</dbReference>
<dbReference type="FunFam" id="2.60.40.1730:FF:000004">
    <property type="entry name" value="Leukotriene A(4) hydrolase"/>
    <property type="match status" value="1"/>
</dbReference>
<dbReference type="FunFam" id="3.30.2010.30:FF:000001">
    <property type="entry name" value="Leukotriene A(4) hydrolase"/>
    <property type="match status" value="1"/>
</dbReference>
<dbReference type="Gene3D" id="3.30.2010.30">
    <property type="match status" value="1"/>
</dbReference>
<dbReference type="Gene3D" id="1.10.390.10">
    <property type="entry name" value="Neutral Protease Domain 2"/>
    <property type="match status" value="1"/>
</dbReference>
<dbReference type="Gene3D" id="1.25.40.320">
    <property type="entry name" value="Peptidase M1, leukotriene A4 hydrolase/aminopeptidase C-terminal domain"/>
    <property type="match status" value="1"/>
</dbReference>
<dbReference type="Gene3D" id="2.60.40.1730">
    <property type="entry name" value="tricorn interacting facor f3 domain"/>
    <property type="match status" value="1"/>
</dbReference>
<dbReference type="InterPro" id="IPR045357">
    <property type="entry name" value="Aminopeptidase_N-like_N"/>
</dbReference>
<dbReference type="InterPro" id="IPR042097">
    <property type="entry name" value="Aminopeptidase_N-like_N_sf"/>
</dbReference>
<dbReference type="InterPro" id="IPR016024">
    <property type="entry name" value="ARM-type_fold"/>
</dbReference>
<dbReference type="InterPro" id="IPR049980">
    <property type="entry name" value="LTA4H_cat"/>
</dbReference>
<dbReference type="InterPro" id="IPR038502">
    <property type="entry name" value="M1_LTA-4_hydro/amino_C_sf"/>
</dbReference>
<dbReference type="InterPro" id="IPR034015">
    <property type="entry name" value="M1_LTA4H"/>
</dbReference>
<dbReference type="InterPro" id="IPR001930">
    <property type="entry name" value="Peptidase_M1"/>
</dbReference>
<dbReference type="InterPro" id="IPR015211">
    <property type="entry name" value="Peptidase_M1_C"/>
</dbReference>
<dbReference type="InterPro" id="IPR014782">
    <property type="entry name" value="Peptidase_M1_dom"/>
</dbReference>
<dbReference type="InterPro" id="IPR027268">
    <property type="entry name" value="Peptidase_M4/M1_CTD_sf"/>
</dbReference>
<dbReference type="PANTHER" id="PTHR45726">
    <property type="entry name" value="LEUKOTRIENE A-4 HYDROLASE"/>
    <property type="match status" value="1"/>
</dbReference>
<dbReference type="PANTHER" id="PTHR45726:SF3">
    <property type="entry name" value="LEUKOTRIENE A-4 HYDROLASE"/>
    <property type="match status" value="1"/>
</dbReference>
<dbReference type="Pfam" id="PF09127">
    <property type="entry name" value="Leuk-A4-hydro_C"/>
    <property type="match status" value="1"/>
</dbReference>
<dbReference type="Pfam" id="PF01433">
    <property type="entry name" value="Peptidase_M1"/>
    <property type="match status" value="1"/>
</dbReference>
<dbReference type="Pfam" id="PF17900">
    <property type="entry name" value="Peptidase_M1_N"/>
    <property type="match status" value="1"/>
</dbReference>
<dbReference type="PRINTS" id="PR00756">
    <property type="entry name" value="ALADIPTASE"/>
</dbReference>
<dbReference type="SMART" id="SM01263">
    <property type="entry name" value="Leuk-A4-hydro_C"/>
    <property type="match status" value="1"/>
</dbReference>
<dbReference type="SUPFAM" id="SSF48371">
    <property type="entry name" value="ARM repeat"/>
    <property type="match status" value="1"/>
</dbReference>
<dbReference type="SUPFAM" id="SSF63737">
    <property type="entry name" value="Leukotriene A4 hydrolase N-terminal domain"/>
    <property type="match status" value="1"/>
</dbReference>
<dbReference type="SUPFAM" id="SSF55486">
    <property type="entry name" value="Metalloproteases ('zincins'), catalytic domain"/>
    <property type="match status" value="1"/>
</dbReference>
<dbReference type="PROSITE" id="PS00142">
    <property type="entry name" value="ZINC_PROTEASE"/>
    <property type="match status" value="1"/>
</dbReference>
<name>AMP1_CAEEL</name>
<evidence type="ECO:0000250" key="1">
    <source>
        <dbReference type="UniProtKB" id="P09960"/>
    </source>
</evidence>
<evidence type="ECO:0000255" key="2">
    <source>
        <dbReference type="PROSITE-ProRule" id="PRU10095"/>
    </source>
</evidence>
<evidence type="ECO:0000269" key="3">
    <source>
    </source>
</evidence>
<evidence type="ECO:0000303" key="4">
    <source>
    </source>
</evidence>
<evidence type="ECO:0000305" key="5"/>
<evidence type="ECO:0000305" key="6">
    <source>
    </source>
</evidence>
<evidence type="ECO:0000312" key="7">
    <source>
        <dbReference type="EMBL" id="AAC70927.1"/>
    </source>
</evidence>
<evidence type="ECO:0000312" key="8">
    <source>
        <dbReference type="Proteomes" id="UP000001940"/>
    </source>
</evidence>
<evidence type="ECO:0000312" key="9">
    <source>
        <dbReference type="WormBase" id="C42C1.11a"/>
    </source>
</evidence>
<evidence type="ECO:0000312" key="10">
    <source>
        <dbReference type="WormBase" id="C42C1.11b"/>
    </source>
</evidence>
<evidence type="ECO:0000312" key="11">
    <source>
        <dbReference type="WormBase" id="C42C1.11c"/>
    </source>
</evidence>
<comment type="function">
    <text evidence="3">Aminopeptidase which preferentially removes N-terminal Arg and Lys residues from peptides and proteins.</text>
</comment>
<comment type="catalytic activity">
    <reaction evidence="6">
        <text>Release of N-terminal Arg and Lys from oligopeptides when P1' is not Pro. Also acts on arylamides of Arg and Lys.</text>
        <dbReference type="EC" id="3.4.11.6"/>
    </reaction>
</comment>
<comment type="cofactor">
    <cofactor evidence="1">
        <name>Zn(2+)</name>
        <dbReference type="ChEBI" id="CHEBI:29105"/>
    </cofactor>
    <text evidence="1">Binds 1 zinc ion per subunit.</text>
</comment>
<comment type="biophysicochemical properties">
    <kinetics>
        <KM evidence="3">0.39 mM for L-Lys-pNitroaniline</KM>
        <KM evidence="3">0.43 mM for L-Arg-pNitroaniline</KM>
        <KM evidence="3">0.46 mM for L-Met-pNitroaniline</KM>
        <KM evidence="3">0.9 mM for L-Val-pNitroaniline</KM>
        <KM evidence="3">1.9 mM for L-Pro-pNitroaniline</KM>
        <KM evidence="3">2 mM for L-Leu-pNitroaniline</KM>
        <KM evidence="3">5.53 mM for L-Ala-pNitroaniline</KM>
        <text evidence="3">No activity with L-Asp-pNA, L-Glu-pNA or D-Leu-pNA.</text>
    </kinetics>
</comment>
<comment type="subcellular location">
    <subcellularLocation>
        <location evidence="3">Cytoplasm</location>
    </subcellularLocation>
</comment>
<comment type="alternative products">
    <event type="alternative splicing"/>
    <isoform>
        <id>G5EFT4-1</id>
        <name evidence="9">a</name>
        <sequence type="displayed"/>
    </isoform>
    <isoform>
        <id>G5EFT4-2</id>
        <name evidence="10">b</name>
        <sequence type="described" ref="VSP_058996 VSP_058997"/>
    </isoform>
    <isoform>
        <id>G5EFT4-3</id>
        <name evidence="11">c</name>
        <sequence type="described" ref="VSP_058995"/>
    </isoform>
</comment>
<comment type="miscellaneous">
    <text evidence="3">Despite its similarity to leukotriene hydrolases, AP-1 does not have leukotriene hydrolase activity. One of the mammalian leukotriene binding sites, 'Tyr-378', is replaced by a Phe residue in AP-1.</text>
</comment>
<comment type="similarity">
    <text evidence="5">Belongs to the peptidase M1 family.</text>
</comment>
<reference evidence="7" key="1">
    <citation type="journal article" date="1998" name="J. Biol. Chem.">
        <title>Molecular cloning and functional expression of a Caenorhabditis elegans aminopeptidase structurally related to mammalian leukotriene A4 hydrolases.</title>
        <authorList>
            <person name="Abdel Baset H."/>
            <person name="Ford-Hutchinson A.W."/>
            <person name="O'Neill G.P."/>
        </authorList>
    </citation>
    <scope>NUCLEOTIDE SEQUENCE [GENOMIC DNA / MRNA] (ISOFORM A)</scope>
    <scope>FUNCTION</scope>
    <scope>CATALYTIC ACTIVITY</scope>
    <scope>BIOPHYSICOCHEMICAL PROPERTIES</scope>
    <scope>SUBCELLULAR LOCATION</scope>
</reference>
<reference evidence="8" key="2">
    <citation type="journal article" date="1998" name="Science">
        <title>Genome sequence of the nematode C. elegans: a platform for investigating biology.</title>
        <authorList>
            <consortium name="The C. elegans sequencing consortium"/>
        </authorList>
    </citation>
    <scope>NUCLEOTIDE SEQUENCE [LARGE SCALE GENOMIC DNA]</scope>
    <source>
        <strain evidence="8">Bristol N2</strain>
    </source>
</reference>
<organism evidence="7">
    <name type="scientific">Caenorhabditis elegans</name>
    <dbReference type="NCBI Taxonomy" id="6239"/>
    <lineage>
        <taxon>Eukaryota</taxon>
        <taxon>Metazoa</taxon>
        <taxon>Ecdysozoa</taxon>
        <taxon>Nematoda</taxon>
        <taxon>Chromadorea</taxon>
        <taxon>Rhabditida</taxon>
        <taxon>Rhabditina</taxon>
        <taxon>Rhabditomorpha</taxon>
        <taxon>Rhabditoidea</taxon>
        <taxon>Rhabditidae</taxon>
        <taxon>Peloderinae</taxon>
        <taxon>Caenorhabditis</taxon>
    </lineage>
</organism>